<accession>Q7W9B4</accession>
<sequence length="326" mass="34665">MMTAEVTAADAEVLLAQPRGFCAGVDRAIDIVERALELHGAPIYVRHEIVHNRYVVEDLRGKGAVFIDELDQAPAGAIVVFSAHGVSQAVRGEAEARGLRVFDATCPLVTKVHIEVARMRAAGREIVMIGHKGHPEVEGTLGQAQGGMYLVETVEDVAALQVSDPGNLAYVTQTTLSVDDAAAVAGALKARFPGIVEPKKSDICYATQNRQDAVKLLAPECDLVLVVGSTNSSNSNRLREVAERKGVAAYLIDGAHAIDPAWLQGRRSIGITAGASAPEVLVQQVVERVRELGAVSVRTMPGLEESVAFPLPKGLSRKIAQTESLE</sequence>
<dbReference type="EC" id="1.17.7.4" evidence="1"/>
<dbReference type="EMBL" id="BX640428">
    <property type="protein sequence ID" value="CAE37153.1"/>
    <property type="molecule type" value="Genomic_DNA"/>
</dbReference>
<dbReference type="SMR" id="Q7W9B4"/>
<dbReference type="KEGG" id="bpa:BPP1852"/>
<dbReference type="HOGENOM" id="CLU_027486_1_1_4"/>
<dbReference type="UniPathway" id="UPA00056">
    <property type="reaction ID" value="UER00097"/>
</dbReference>
<dbReference type="UniPathway" id="UPA00059">
    <property type="reaction ID" value="UER00105"/>
</dbReference>
<dbReference type="Proteomes" id="UP000001421">
    <property type="component" value="Chromosome"/>
</dbReference>
<dbReference type="GO" id="GO:0051539">
    <property type="term" value="F:4 iron, 4 sulfur cluster binding"/>
    <property type="evidence" value="ECO:0007669"/>
    <property type="project" value="UniProtKB-UniRule"/>
</dbReference>
<dbReference type="GO" id="GO:0051745">
    <property type="term" value="F:4-hydroxy-3-methylbut-2-enyl diphosphate reductase activity"/>
    <property type="evidence" value="ECO:0007669"/>
    <property type="project" value="UniProtKB-UniRule"/>
</dbReference>
<dbReference type="GO" id="GO:0046872">
    <property type="term" value="F:metal ion binding"/>
    <property type="evidence" value="ECO:0007669"/>
    <property type="project" value="UniProtKB-KW"/>
</dbReference>
<dbReference type="GO" id="GO:0050992">
    <property type="term" value="P:dimethylallyl diphosphate biosynthetic process"/>
    <property type="evidence" value="ECO:0007669"/>
    <property type="project" value="UniProtKB-UniRule"/>
</dbReference>
<dbReference type="GO" id="GO:0019288">
    <property type="term" value="P:isopentenyl diphosphate biosynthetic process, methylerythritol 4-phosphate pathway"/>
    <property type="evidence" value="ECO:0007669"/>
    <property type="project" value="UniProtKB-UniRule"/>
</dbReference>
<dbReference type="GO" id="GO:0016114">
    <property type="term" value="P:terpenoid biosynthetic process"/>
    <property type="evidence" value="ECO:0007669"/>
    <property type="project" value="UniProtKB-UniRule"/>
</dbReference>
<dbReference type="CDD" id="cd13944">
    <property type="entry name" value="lytB_ispH"/>
    <property type="match status" value="1"/>
</dbReference>
<dbReference type="Gene3D" id="3.40.50.11270">
    <property type="match status" value="1"/>
</dbReference>
<dbReference type="Gene3D" id="3.40.1010.20">
    <property type="entry name" value="4-hydroxy-3-methylbut-2-enyl diphosphate reductase, catalytic domain"/>
    <property type="match status" value="2"/>
</dbReference>
<dbReference type="HAMAP" id="MF_00191">
    <property type="entry name" value="IspH"/>
    <property type="match status" value="1"/>
</dbReference>
<dbReference type="InterPro" id="IPR003451">
    <property type="entry name" value="LytB/IspH"/>
</dbReference>
<dbReference type="NCBIfam" id="TIGR00216">
    <property type="entry name" value="ispH_lytB"/>
    <property type="match status" value="1"/>
</dbReference>
<dbReference type="NCBIfam" id="NF002188">
    <property type="entry name" value="PRK01045.1-2"/>
    <property type="match status" value="1"/>
</dbReference>
<dbReference type="NCBIfam" id="NF002190">
    <property type="entry name" value="PRK01045.1-4"/>
    <property type="match status" value="1"/>
</dbReference>
<dbReference type="PANTHER" id="PTHR30426">
    <property type="entry name" value="4-HYDROXY-3-METHYLBUT-2-ENYL DIPHOSPHATE REDUCTASE"/>
    <property type="match status" value="1"/>
</dbReference>
<dbReference type="PANTHER" id="PTHR30426:SF0">
    <property type="entry name" value="4-HYDROXY-3-METHYLBUT-2-ENYL DIPHOSPHATE REDUCTASE"/>
    <property type="match status" value="1"/>
</dbReference>
<dbReference type="Pfam" id="PF02401">
    <property type="entry name" value="LYTB"/>
    <property type="match status" value="1"/>
</dbReference>
<name>ISPH_BORPA</name>
<feature type="chain" id="PRO_0000128782" description="4-hydroxy-3-methylbut-2-enyl diphosphate reductase">
    <location>
        <begin position="1"/>
        <end position="326"/>
    </location>
</feature>
<feature type="active site" description="Proton donor" evidence="1">
    <location>
        <position position="136"/>
    </location>
</feature>
<feature type="binding site" evidence="1">
    <location>
        <position position="22"/>
    </location>
    <ligand>
        <name>[4Fe-4S] cluster</name>
        <dbReference type="ChEBI" id="CHEBI:49883"/>
    </ligand>
</feature>
<feature type="binding site" evidence="1">
    <location>
        <position position="51"/>
    </location>
    <ligand>
        <name>(2E)-4-hydroxy-3-methylbut-2-enyl diphosphate</name>
        <dbReference type="ChEBI" id="CHEBI:128753"/>
    </ligand>
</feature>
<feature type="binding site" evidence="1">
    <location>
        <position position="51"/>
    </location>
    <ligand>
        <name>dimethylallyl diphosphate</name>
        <dbReference type="ChEBI" id="CHEBI:57623"/>
    </ligand>
</feature>
<feature type="binding site" evidence="1">
    <location>
        <position position="51"/>
    </location>
    <ligand>
        <name>isopentenyl diphosphate</name>
        <dbReference type="ChEBI" id="CHEBI:128769"/>
    </ligand>
</feature>
<feature type="binding site" evidence="1">
    <location>
        <position position="84"/>
    </location>
    <ligand>
        <name>(2E)-4-hydroxy-3-methylbut-2-enyl diphosphate</name>
        <dbReference type="ChEBI" id="CHEBI:128753"/>
    </ligand>
</feature>
<feature type="binding site" evidence="1">
    <location>
        <position position="84"/>
    </location>
    <ligand>
        <name>dimethylallyl diphosphate</name>
        <dbReference type="ChEBI" id="CHEBI:57623"/>
    </ligand>
</feature>
<feature type="binding site" evidence="1">
    <location>
        <position position="84"/>
    </location>
    <ligand>
        <name>isopentenyl diphosphate</name>
        <dbReference type="ChEBI" id="CHEBI:128769"/>
    </ligand>
</feature>
<feature type="binding site" evidence="1">
    <location>
        <position position="106"/>
    </location>
    <ligand>
        <name>[4Fe-4S] cluster</name>
        <dbReference type="ChEBI" id="CHEBI:49883"/>
    </ligand>
</feature>
<feature type="binding site" evidence="1">
    <location>
        <position position="134"/>
    </location>
    <ligand>
        <name>(2E)-4-hydroxy-3-methylbut-2-enyl diphosphate</name>
        <dbReference type="ChEBI" id="CHEBI:128753"/>
    </ligand>
</feature>
<feature type="binding site" evidence="1">
    <location>
        <position position="134"/>
    </location>
    <ligand>
        <name>dimethylallyl diphosphate</name>
        <dbReference type="ChEBI" id="CHEBI:57623"/>
    </ligand>
</feature>
<feature type="binding site" evidence="1">
    <location>
        <position position="134"/>
    </location>
    <ligand>
        <name>isopentenyl diphosphate</name>
        <dbReference type="ChEBI" id="CHEBI:128769"/>
    </ligand>
</feature>
<feature type="binding site" evidence="1">
    <location>
        <position position="174"/>
    </location>
    <ligand>
        <name>(2E)-4-hydroxy-3-methylbut-2-enyl diphosphate</name>
        <dbReference type="ChEBI" id="CHEBI:128753"/>
    </ligand>
</feature>
<feature type="binding site" evidence="1">
    <location>
        <position position="204"/>
    </location>
    <ligand>
        <name>[4Fe-4S] cluster</name>
        <dbReference type="ChEBI" id="CHEBI:49883"/>
    </ligand>
</feature>
<feature type="binding site" evidence="1">
    <location>
        <position position="232"/>
    </location>
    <ligand>
        <name>(2E)-4-hydroxy-3-methylbut-2-enyl diphosphate</name>
        <dbReference type="ChEBI" id="CHEBI:128753"/>
    </ligand>
</feature>
<feature type="binding site" evidence="1">
    <location>
        <position position="232"/>
    </location>
    <ligand>
        <name>dimethylallyl diphosphate</name>
        <dbReference type="ChEBI" id="CHEBI:57623"/>
    </ligand>
</feature>
<feature type="binding site" evidence="1">
    <location>
        <position position="232"/>
    </location>
    <ligand>
        <name>isopentenyl diphosphate</name>
        <dbReference type="ChEBI" id="CHEBI:128769"/>
    </ligand>
</feature>
<feature type="binding site" evidence="1">
    <location>
        <position position="233"/>
    </location>
    <ligand>
        <name>(2E)-4-hydroxy-3-methylbut-2-enyl diphosphate</name>
        <dbReference type="ChEBI" id="CHEBI:128753"/>
    </ligand>
</feature>
<feature type="binding site" evidence="1">
    <location>
        <position position="233"/>
    </location>
    <ligand>
        <name>dimethylallyl diphosphate</name>
        <dbReference type="ChEBI" id="CHEBI:57623"/>
    </ligand>
</feature>
<feature type="binding site" evidence="1">
    <location>
        <position position="233"/>
    </location>
    <ligand>
        <name>isopentenyl diphosphate</name>
        <dbReference type="ChEBI" id="CHEBI:128769"/>
    </ligand>
</feature>
<feature type="binding site" evidence="1">
    <location>
        <position position="234"/>
    </location>
    <ligand>
        <name>(2E)-4-hydroxy-3-methylbut-2-enyl diphosphate</name>
        <dbReference type="ChEBI" id="CHEBI:128753"/>
    </ligand>
</feature>
<feature type="binding site" evidence="1">
    <location>
        <position position="234"/>
    </location>
    <ligand>
        <name>dimethylallyl diphosphate</name>
        <dbReference type="ChEBI" id="CHEBI:57623"/>
    </ligand>
</feature>
<feature type="binding site" evidence="1">
    <location>
        <position position="234"/>
    </location>
    <ligand>
        <name>isopentenyl diphosphate</name>
        <dbReference type="ChEBI" id="CHEBI:128769"/>
    </ligand>
</feature>
<feature type="binding site" evidence="1">
    <location>
        <position position="276"/>
    </location>
    <ligand>
        <name>(2E)-4-hydroxy-3-methylbut-2-enyl diphosphate</name>
        <dbReference type="ChEBI" id="CHEBI:128753"/>
    </ligand>
</feature>
<feature type="binding site" evidence="1">
    <location>
        <position position="276"/>
    </location>
    <ligand>
        <name>dimethylallyl diphosphate</name>
        <dbReference type="ChEBI" id="CHEBI:57623"/>
    </ligand>
</feature>
<feature type="binding site" evidence="1">
    <location>
        <position position="276"/>
    </location>
    <ligand>
        <name>isopentenyl diphosphate</name>
        <dbReference type="ChEBI" id="CHEBI:128769"/>
    </ligand>
</feature>
<proteinExistence type="inferred from homology"/>
<organism>
    <name type="scientific">Bordetella parapertussis (strain 12822 / ATCC BAA-587 / NCTC 13253)</name>
    <dbReference type="NCBI Taxonomy" id="257311"/>
    <lineage>
        <taxon>Bacteria</taxon>
        <taxon>Pseudomonadati</taxon>
        <taxon>Pseudomonadota</taxon>
        <taxon>Betaproteobacteria</taxon>
        <taxon>Burkholderiales</taxon>
        <taxon>Alcaligenaceae</taxon>
        <taxon>Bordetella</taxon>
    </lineage>
</organism>
<protein>
    <recommendedName>
        <fullName evidence="1">4-hydroxy-3-methylbut-2-enyl diphosphate reductase</fullName>
        <shortName evidence="1">HMBPP reductase</shortName>
        <ecNumber evidence="1">1.17.7.4</ecNumber>
    </recommendedName>
</protein>
<evidence type="ECO:0000255" key="1">
    <source>
        <dbReference type="HAMAP-Rule" id="MF_00191"/>
    </source>
</evidence>
<gene>
    <name evidence="1" type="primary">ispH</name>
    <name type="synonym">lytB</name>
    <name type="ordered locus">BPP1852</name>
</gene>
<keyword id="KW-0004">4Fe-4S</keyword>
<keyword id="KW-0408">Iron</keyword>
<keyword id="KW-0411">Iron-sulfur</keyword>
<keyword id="KW-0414">Isoprene biosynthesis</keyword>
<keyword id="KW-0479">Metal-binding</keyword>
<keyword id="KW-0560">Oxidoreductase</keyword>
<comment type="function">
    <text evidence="1">Catalyzes the conversion of 1-hydroxy-2-methyl-2-(E)-butenyl 4-diphosphate (HMBPP) into a mixture of isopentenyl diphosphate (IPP) and dimethylallyl diphosphate (DMAPP). Acts in the terminal step of the DOXP/MEP pathway for isoprenoid precursor biosynthesis.</text>
</comment>
<comment type="catalytic activity">
    <reaction evidence="1">
        <text>isopentenyl diphosphate + 2 oxidized [2Fe-2S]-[ferredoxin] + H2O = (2E)-4-hydroxy-3-methylbut-2-enyl diphosphate + 2 reduced [2Fe-2S]-[ferredoxin] + 2 H(+)</text>
        <dbReference type="Rhea" id="RHEA:24488"/>
        <dbReference type="Rhea" id="RHEA-COMP:10000"/>
        <dbReference type="Rhea" id="RHEA-COMP:10001"/>
        <dbReference type="ChEBI" id="CHEBI:15377"/>
        <dbReference type="ChEBI" id="CHEBI:15378"/>
        <dbReference type="ChEBI" id="CHEBI:33737"/>
        <dbReference type="ChEBI" id="CHEBI:33738"/>
        <dbReference type="ChEBI" id="CHEBI:128753"/>
        <dbReference type="ChEBI" id="CHEBI:128769"/>
        <dbReference type="EC" id="1.17.7.4"/>
    </reaction>
</comment>
<comment type="catalytic activity">
    <reaction evidence="1">
        <text>dimethylallyl diphosphate + 2 oxidized [2Fe-2S]-[ferredoxin] + H2O = (2E)-4-hydroxy-3-methylbut-2-enyl diphosphate + 2 reduced [2Fe-2S]-[ferredoxin] + 2 H(+)</text>
        <dbReference type="Rhea" id="RHEA:24825"/>
        <dbReference type="Rhea" id="RHEA-COMP:10000"/>
        <dbReference type="Rhea" id="RHEA-COMP:10001"/>
        <dbReference type="ChEBI" id="CHEBI:15377"/>
        <dbReference type="ChEBI" id="CHEBI:15378"/>
        <dbReference type="ChEBI" id="CHEBI:33737"/>
        <dbReference type="ChEBI" id="CHEBI:33738"/>
        <dbReference type="ChEBI" id="CHEBI:57623"/>
        <dbReference type="ChEBI" id="CHEBI:128753"/>
        <dbReference type="EC" id="1.17.7.4"/>
    </reaction>
</comment>
<comment type="cofactor">
    <cofactor evidence="1">
        <name>[4Fe-4S] cluster</name>
        <dbReference type="ChEBI" id="CHEBI:49883"/>
    </cofactor>
    <text evidence="1">Binds 1 [4Fe-4S] cluster per subunit.</text>
</comment>
<comment type="pathway">
    <text evidence="1">Isoprenoid biosynthesis; dimethylallyl diphosphate biosynthesis; dimethylallyl diphosphate from (2E)-4-hydroxy-3-methylbutenyl diphosphate: step 1/1.</text>
</comment>
<comment type="pathway">
    <text evidence="1">Isoprenoid biosynthesis; isopentenyl diphosphate biosynthesis via DXP pathway; isopentenyl diphosphate from 1-deoxy-D-xylulose 5-phosphate: step 6/6.</text>
</comment>
<comment type="similarity">
    <text evidence="1">Belongs to the IspH family.</text>
</comment>
<reference key="1">
    <citation type="journal article" date="2003" name="Nat. Genet.">
        <title>Comparative analysis of the genome sequences of Bordetella pertussis, Bordetella parapertussis and Bordetella bronchiseptica.</title>
        <authorList>
            <person name="Parkhill J."/>
            <person name="Sebaihia M."/>
            <person name="Preston A."/>
            <person name="Murphy L.D."/>
            <person name="Thomson N.R."/>
            <person name="Harris D.E."/>
            <person name="Holden M.T.G."/>
            <person name="Churcher C.M."/>
            <person name="Bentley S.D."/>
            <person name="Mungall K.L."/>
            <person name="Cerdeno-Tarraga A.-M."/>
            <person name="Temple L."/>
            <person name="James K.D."/>
            <person name="Harris B."/>
            <person name="Quail M.A."/>
            <person name="Achtman M."/>
            <person name="Atkin R."/>
            <person name="Baker S."/>
            <person name="Basham D."/>
            <person name="Bason N."/>
            <person name="Cherevach I."/>
            <person name="Chillingworth T."/>
            <person name="Collins M."/>
            <person name="Cronin A."/>
            <person name="Davis P."/>
            <person name="Doggett J."/>
            <person name="Feltwell T."/>
            <person name="Goble A."/>
            <person name="Hamlin N."/>
            <person name="Hauser H."/>
            <person name="Holroyd S."/>
            <person name="Jagels K."/>
            <person name="Leather S."/>
            <person name="Moule S."/>
            <person name="Norberczak H."/>
            <person name="O'Neil S."/>
            <person name="Ormond D."/>
            <person name="Price C."/>
            <person name="Rabbinowitsch E."/>
            <person name="Rutter S."/>
            <person name="Sanders M."/>
            <person name="Saunders D."/>
            <person name="Seeger K."/>
            <person name="Sharp S."/>
            <person name="Simmonds M."/>
            <person name="Skelton J."/>
            <person name="Squares R."/>
            <person name="Squares S."/>
            <person name="Stevens K."/>
            <person name="Unwin L."/>
            <person name="Whitehead S."/>
            <person name="Barrell B.G."/>
            <person name="Maskell D.J."/>
        </authorList>
    </citation>
    <scope>NUCLEOTIDE SEQUENCE [LARGE SCALE GENOMIC DNA]</scope>
    <source>
        <strain>12822 / ATCC BAA-587 / NCTC 13253</strain>
    </source>
</reference>